<comment type="function">
    <text evidence="1">The GINS complex plays an essential role in the initiation of DNA replication. Has a role in chromosome segregation (By similarity).</text>
</comment>
<comment type="subunit">
    <text evidence="1">Component of the GINS complex which is a heterotetramer of SLD5, PSF1, PSF2 and PSF3.</text>
</comment>
<comment type="subcellular location">
    <subcellularLocation>
        <location evidence="1">Nucleus</location>
    </subcellularLocation>
</comment>
<comment type="similarity">
    <text evidence="2">Belongs to the GINS4/SLD5 family.</text>
</comment>
<accession>Q6BXX6</accession>
<proteinExistence type="inferred from homology"/>
<gene>
    <name type="primary">SLD5</name>
    <name type="ordered locus">DEHA2A14102g</name>
</gene>
<keyword id="KW-0159">Chromosome partition</keyword>
<keyword id="KW-0235">DNA replication</keyword>
<keyword id="KW-0539">Nucleus</keyword>
<keyword id="KW-1185">Reference proteome</keyword>
<dbReference type="EMBL" id="CR382133">
    <property type="protein sequence ID" value="CAG84921.1"/>
    <property type="molecule type" value="Genomic_DNA"/>
</dbReference>
<dbReference type="RefSeq" id="XP_456943.1">
    <property type="nucleotide sequence ID" value="XM_456943.1"/>
</dbReference>
<dbReference type="SMR" id="Q6BXX6"/>
<dbReference type="FunCoup" id="Q6BXX6">
    <property type="interactions" value="675"/>
</dbReference>
<dbReference type="STRING" id="284592.Q6BXX6"/>
<dbReference type="GeneID" id="2899394"/>
<dbReference type="KEGG" id="dha:DEHA2A14102g"/>
<dbReference type="VEuPathDB" id="FungiDB:DEHA2A14102g"/>
<dbReference type="eggNOG" id="KOG3176">
    <property type="taxonomic scope" value="Eukaryota"/>
</dbReference>
<dbReference type="HOGENOM" id="CLU_071893_2_0_1"/>
<dbReference type="InParanoid" id="Q6BXX6"/>
<dbReference type="OMA" id="ILETAWI"/>
<dbReference type="OrthoDB" id="338231at2759"/>
<dbReference type="Proteomes" id="UP000000599">
    <property type="component" value="Chromosome A"/>
</dbReference>
<dbReference type="GO" id="GO:0071162">
    <property type="term" value="C:CMG complex"/>
    <property type="evidence" value="ECO:0007669"/>
    <property type="project" value="EnsemblFungi"/>
</dbReference>
<dbReference type="GO" id="GO:0000811">
    <property type="term" value="C:GINS complex"/>
    <property type="evidence" value="ECO:0007669"/>
    <property type="project" value="EnsemblFungi"/>
</dbReference>
<dbReference type="GO" id="GO:0043596">
    <property type="term" value="C:nuclear replication fork"/>
    <property type="evidence" value="ECO:0007669"/>
    <property type="project" value="EnsemblFungi"/>
</dbReference>
<dbReference type="GO" id="GO:0007059">
    <property type="term" value="P:chromosome segregation"/>
    <property type="evidence" value="ECO:0007669"/>
    <property type="project" value="UniProtKB-KW"/>
</dbReference>
<dbReference type="GO" id="GO:0006261">
    <property type="term" value="P:DNA-templated DNA replication"/>
    <property type="evidence" value="ECO:0007669"/>
    <property type="project" value="EnsemblFungi"/>
</dbReference>
<dbReference type="GO" id="GO:0000727">
    <property type="term" value="P:double-strand break repair via break-induced replication"/>
    <property type="evidence" value="ECO:0007669"/>
    <property type="project" value="EnsemblFungi"/>
</dbReference>
<dbReference type="CDD" id="cd11711">
    <property type="entry name" value="GINS_A_Sld5"/>
    <property type="match status" value="1"/>
</dbReference>
<dbReference type="CDD" id="cd21692">
    <property type="entry name" value="GINS_B_Sld5"/>
    <property type="match status" value="1"/>
</dbReference>
<dbReference type="Gene3D" id="1.20.58.1030">
    <property type="match status" value="1"/>
</dbReference>
<dbReference type="Gene3D" id="3.40.5.60">
    <property type="match status" value="1"/>
</dbReference>
<dbReference type="InterPro" id="IPR021151">
    <property type="entry name" value="GINS_A"/>
</dbReference>
<dbReference type="InterPro" id="IPR036224">
    <property type="entry name" value="GINS_bundle-like_dom_sf"/>
</dbReference>
<dbReference type="InterPro" id="IPR008591">
    <property type="entry name" value="GINS_Sld5"/>
</dbReference>
<dbReference type="InterPro" id="IPR031633">
    <property type="entry name" value="SLD5_C"/>
</dbReference>
<dbReference type="InterPro" id="IPR038749">
    <property type="entry name" value="Sld5_GINS_A"/>
</dbReference>
<dbReference type="PANTHER" id="PTHR21206:SF0">
    <property type="entry name" value="DNA REPLICATION COMPLEX GINS PROTEIN SLD5"/>
    <property type="match status" value="1"/>
</dbReference>
<dbReference type="PANTHER" id="PTHR21206">
    <property type="entry name" value="SLD5 PROTEIN"/>
    <property type="match status" value="1"/>
</dbReference>
<dbReference type="Pfam" id="PF05916">
    <property type="entry name" value="Sld5"/>
    <property type="match status" value="1"/>
</dbReference>
<dbReference type="Pfam" id="PF16922">
    <property type="entry name" value="SLD5_C"/>
    <property type="match status" value="1"/>
</dbReference>
<dbReference type="PIRSF" id="PIRSF007764">
    <property type="entry name" value="Sld5"/>
    <property type="match status" value="1"/>
</dbReference>
<dbReference type="SUPFAM" id="SSF158573">
    <property type="entry name" value="GINS helical bundle-like"/>
    <property type="match status" value="1"/>
</dbReference>
<dbReference type="SUPFAM" id="SSF160059">
    <property type="entry name" value="PriA/YqbF domain"/>
    <property type="match status" value="1"/>
</dbReference>
<feature type="chain" id="PRO_0000255431" description="DNA replication complex GINS protein SLD5">
    <location>
        <begin position="1"/>
        <end position="245"/>
    </location>
</feature>
<protein>
    <recommendedName>
        <fullName>DNA replication complex GINS protein SLD5</fullName>
    </recommendedName>
</protein>
<reference key="1">
    <citation type="journal article" date="2004" name="Nature">
        <title>Genome evolution in yeasts.</title>
        <authorList>
            <person name="Dujon B."/>
            <person name="Sherman D."/>
            <person name="Fischer G."/>
            <person name="Durrens P."/>
            <person name="Casaregola S."/>
            <person name="Lafontaine I."/>
            <person name="de Montigny J."/>
            <person name="Marck C."/>
            <person name="Neuveglise C."/>
            <person name="Talla E."/>
            <person name="Goffard N."/>
            <person name="Frangeul L."/>
            <person name="Aigle M."/>
            <person name="Anthouard V."/>
            <person name="Babour A."/>
            <person name="Barbe V."/>
            <person name="Barnay S."/>
            <person name="Blanchin S."/>
            <person name="Beckerich J.-M."/>
            <person name="Beyne E."/>
            <person name="Bleykasten C."/>
            <person name="Boisrame A."/>
            <person name="Boyer J."/>
            <person name="Cattolico L."/>
            <person name="Confanioleri F."/>
            <person name="de Daruvar A."/>
            <person name="Despons L."/>
            <person name="Fabre E."/>
            <person name="Fairhead C."/>
            <person name="Ferry-Dumazet H."/>
            <person name="Groppi A."/>
            <person name="Hantraye F."/>
            <person name="Hennequin C."/>
            <person name="Jauniaux N."/>
            <person name="Joyet P."/>
            <person name="Kachouri R."/>
            <person name="Kerrest A."/>
            <person name="Koszul R."/>
            <person name="Lemaire M."/>
            <person name="Lesur I."/>
            <person name="Ma L."/>
            <person name="Muller H."/>
            <person name="Nicaud J.-M."/>
            <person name="Nikolski M."/>
            <person name="Oztas S."/>
            <person name="Ozier-Kalogeropoulos O."/>
            <person name="Pellenz S."/>
            <person name="Potier S."/>
            <person name="Richard G.-F."/>
            <person name="Straub M.-L."/>
            <person name="Suleau A."/>
            <person name="Swennen D."/>
            <person name="Tekaia F."/>
            <person name="Wesolowski-Louvel M."/>
            <person name="Westhof E."/>
            <person name="Wirth B."/>
            <person name="Zeniou-Meyer M."/>
            <person name="Zivanovic Y."/>
            <person name="Bolotin-Fukuhara M."/>
            <person name="Thierry A."/>
            <person name="Bouchier C."/>
            <person name="Caudron B."/>
            <person name="Scarpelli C."/>
            <person name="Gaillardin C."/>
            <person name="Weissenbach J."/>
            <person name="Wincker P."/>
            <person name="Souciet J.-L."/>
        </authorList>
    </citation>
    <scope>NUCLEOTIDE SEQUENCE [LARGE SCALE GENOMIC DNA]</scope>
    <source>
        <strain>ATCC 36239 / CBS 767 / BCRC 21394 / JCM 1990 / NBRC 0083 / IGC 2968</strain>
    </source>
</reference>
<sequence>MNKDLDIDDILQEFDDSNVHSKSSKYGIRNSENIYDQLVAAMLNERMSPDVLPYKHELMKEVLTQLSNQQQYLLDSHEYGDSNVESGIVTGDFKLQLMIIETDIERLNYLVRLYLRTRLAKIDKFTIHYINETSNDDPTNDRSLLSPEETEYMHKHFKILTQLYNNSFLKKMPHFLTLLDDTSGGQSMISVPDINQPVFIKVITKVPIIINLDEDEDLELVENGIYVVKYSLIKKYIEIGDIVLI</sequence>
<organism>
    <name type="scientific">Debaryomyces hansenii (strain ATCC 36239 / CBS 767 / BCRC 21394 / JCM 1990 / NBRC 0083 / IGC 2968)</name>
    <name type="common">Yeast</name>
    <name type="synonym">Torulaspora hansenii</name>
    <dbReference type="NCBI Taxonomy" id="284592"/>
    <lineage>
        <taxon>Eukaryota</taxon>
        <taxon>Fungi</taxon>
        <taxon>Dikarya</taxon>
        <taxon>Ascomycota</taxon>
        <taxon>Saccharomycotina</taxon>
        <taxon>Pichiomycetes</taxon>
        <taxon>Debaryomycetaceae</taxon>
        <taxon>Debaryomyces</taxon>
    </lineage>
</organism>
<name>SLD5_DEBHA</name>
<evidence type="ECO:0000250" key="1"/>
<evidence type="ECO:0000305" key="2"/>